<evidence type="ECO:0000255" key="1">
    <source>
        <dbReference type="HAMAP-Rule" id="MF_00081"/>
    </source>
</evidence>
<comment type="function">
    <text evidence="1">Negative regulator of class I heat shock genes (grpE-dnaK-dnaJ and groELS operons). Prevents heat-shock induction of these operons.</text>
</comment>
<comment type="similarity">
    <text evidence="1">Belongs to the HrcA family.</text>
</comment>
<protein>
    <recommendedName>
        <fullName evidence="1">Heat-inducible transcription repressor HrcA</fullName>
    </recommendedName>
</protein>
<reference key="1">
    <citation type="journal article" date="2004" name="Proc. Natl. Acad. Sci. U.S.A.">
        <title>The complete genomic sequence of Nocardia farcinica IFM 10152.</title>
        <authorList>
            <person name="Ishikawa J."/>
            <person name="Yamashita A."/>
            <person name="Mikami Y."/>
            <person name="Hoshino Y."/>
            <person name="Kurita H."/>
            <person name="Hotta K."/>
            <person name="Shiba T."/>
            <person name="Hattori M."/>
        </authorList>
    </citation>
    <scope>NUCLEOTIDE SEQUENCE [LARGE SCALE GENOMIC DNA]</scope>
    <source>
        <strain>IFM 10152</strain>
    </source>
</reference>
<feature type="chain" id="PRO_0000182514" description="Heat-inducible transcription repressor HrcA">
    <location>
        <begin position="1"/>
        <end position="347"/>
    </location>
</feature>
<dbReference type="EMBL" id="AP006618">
    <property type="protein sequence ID" value="BAD56270.1"/>
    <property type="molecule type" value="Genomic_DNA"/>
</dbReference>
<dbReference type="SMR" id="Q5YZX1"/>
<dbReference type="STRING" id="247156.NFA_14250"/>
<dbReference type="KEGG" id="nfa:NFA_14250"/>
<dbReference type="eggNOG" id="COG1420">
    <property type="taxonomic scope" value="Bacteria"/>
</dbReference>
<dbReference type="HOGENOM" id="CLU_050019_2_0_11"/>
<dbReference type="Proteomes" id="UP000006820">
    <property type="component" value="Chromosome"/>
</dbReference>
<dbReference type="GO" id="GO:0003677">
    <property type="term" value="F:DNA binding"/>
    <property type="evidence" value="ECO:0007669"/>
    <property type="project" value="InterPro"/>
</dbReference>
<dbReference type="GO" id="GO:0045892">
    <property type="term" value="P:negative regulation of DNA-templated transcription"/>
    <property type="evidence" value="ECO:0007669"/>
    <property type="project" value="UniProtKB-UniRule"/>
</dbReference>
<dbReference type="FunFam" id="1.10.10.10:FF:000049">
    <property type="entry name" value="Heat-inducible transcription repressor HrcA"/>
    <property type="match status" value="1"/>
</dbReference>
<dbReference type="Gene3D" id="3.30.450.40">
    <property type="match status" value="1"/>
</dbReference>
<dbReference type="Gene3D" id="3.30.390.60">
    <property type="entry name" value="Heat-inducible transcription repressor hrca homolog, domain 3"/>
    <property type="match status" value="1"/>
</dbReference>
<dbReference type="Gene3D" id="1.10.10.10">
    <property type="entry name" value="Winged helix-like DNA-binding domain superfamily/Winged helix DNA-binding domain"/>
    <property type="match status" value="1"/>
</dbReference>
<dbReference type="HAMAP" id="MF_00081">
    <property type="entry name" value="HrcA"/>
    <property type="match status" value="1"/>
</dbReference>
<dbReference type="InterPro" id="IPR029016">
    <property type="entry name" value="GAF-like_dom_sf"/>
</dbReference>
<dbReference type="InterPro" id="IPR002571">
    <property type="entry name" value="HrcA"/>
</dbReference>
<dbReference type="InterPro" id="IPR021153">
    <property type="entry name" value="HrcA_C"/>
</dbReference>
<dbReference type="InterPro" id="IPR036388">
    <property type="entry name" value="WH-like_DNA-bd_sf"/>
</dbReference>
<dbReference type="InterPro" id="IPR036390">
    <property type="entry name" value="WH_DNA-bd_sf"/>
</dbReference>
<dbReference type="InterPro" id="IPR023120">
    <property type="entry name" value="WHTH_transcript_rep_HrcA_IDD"/>
</dbReference>
<dbReference type="NCBIfam" id="TIGR00331">
    <property type="entry name" value="hrcA"/>
    <property type="match status" value="1"/>
</dbReference>
<dbReference type="PANTHER" id="PTHR34824">
    <property type="entry name" value="HEAT-INDUCIBLE TRANSCRIPTION REPRESSOR HRCA"/>
    <property type="match status" value="1"/>
</dbReference>
<dbReference type="PANTHER" id="PTHR34824:SF1">
    <property type="entry name" value="HEAT-INDUCIBLE TRANSCRIPTION REPRESSOR HRCA"/>
    <property type="match status" value="1"/>
</dbReference>
<dbReference type="Pfam" id="PF01628">
    <property type="entry name" value="HrcA"/>
    <property type="match status" value="1"/>
</dbReference>
<dbReference type="PIRSF" id="PIRSF005485">
    <property type="entry name" value="HrcA"/>
    <property type="match status" value="1"/>
</dbReference>
<dbReference type="SUPFAM" id="SSF55781">
    <property type="entry name" value="GAF domain-like"/>
    <property type="match status" value="1"/>
</dbReference>
<dbReference type="SUPFAM" id="SSF46785">
    <property type="entry name" value="Winged helix' DNA-binding domain"/>
    <property type="match status" value="1"/>
</dbReference>
<keyword id="KW-1185">Reference proteome</keyword>
<keyword id="KW-0678">Repressor</keyword>
<keyword id="KW-0346">Stress response</keyword>
<keyword id="KW-0804">Transcription</keyword>
<keyword id="KW-0805">Transcription regulation</keyword>
<proteinExistence type="inferred from homology"/>
<gene>
    <name evidence="1" type="primary">hrcA</name>
    <name type="ordered locus">NFA_14250</name>
</gene>
<accession>Q5YZX1</accession>
<sequence>MGPMSSSTEDRRFEVLRAIVADYVATKEPIGSKTLVERHNLGVSSATVRNDMAVLEAEGYITQPHTSSGRIPTDKGYRQFVDRISEVKPLSAAERRAILQFLESGVDLDDVLRRGVRLLAQLTRQVAVVQYPTVSASTVRHIEVVALNPARLLLVVITDTGRVDQRIVELGAVVDDDDLSALRALLGAAMDGKRLAAASAAVAELPESAPQQLRDVLIRVSTVLVETLVEHPEERLVLGGTANLTRNAADFGLPGSLRQVLEALEEQVVVLKLLAAAQQPGTVTVRIGEETQVEEMRSASVVTTGYGVSGSVLGGMGVLGPTRMDYPGTIASVATVARYIGEVLAER</sequence>
<name>HRCA_NOCFA</name>
<organism>
    <name type="scientific">Nocardia farcinica (strain IFM 10152)</name>
    <dbReference type="NCBI Taxonomy" id="247156"/>
    <lineage>
        <taxon>Bacteria</taxon>
        <taxon>Bacillati</taxon>
        <taxon>Actinomycetota</taxon>
        <taxon>Actinomycetes</taxon>
        <taxon>Mycobacteriales</taxon>
        <taxon>Nocardiaceae</taxon>
        <taxon>Nocardia</taxon>
    </lineage>
</organism>